<proteinExistence type="inferred from homology"/>
<accession>Q3K7B7</accession>
<feature type="chain" id="PRO_1000016423" description="Histidine--tRNA ligase">
    <location>
        <begin position="1"/>
        <end position="429"/>
    </location>
</feature>
<comment type="catalytic activity">
    <reaction evidence="1">
        <text>tRNA(His) + L-histidine + ATP = L-histidyl-tRNA(His) + AMP + diphosphate + H(+)</text>
        <dbReference type="Rhea" id="RHEA:17313"/>
        <dbReference type="Rhea" id="RHEA-COMP:9665"/>
        <dbReference type="Rhea" id="RHEA-COMP:9689"/>
        <dbReference type="ChEBI" id="CHEBI:15378"/>
        <dbReference type="ChEBI" id="CHEBI:30616"/>
        <dbReference type="ChEBI" id="CHEBI:33019"/>
        <dbReference type="ChEBI" id="CHEBI:57595"/>
        <dbReference type="ChEBI" id="CHEBI:78442"/>
        <dbReference type="ChEBI" id="CHEBI:78527"/>
        <dbReference type="ChEBI" id="CHEBI:456215"/>
        <dbReference type="EC" id="6.1.1.21"/>
    </reaction>
</comment>
<comment type="subunit">
    <text evidence="1">Homodimer.</text>
</comment>
<comment type="subcellular location">
    <subcellularLocation>
        <location evidence="1">Cytoplasm</location>
    </subcellularLocation>
</comment>
<comment type="similarity">
    <text evidence="1">Belongs to the class-II aminoacyl-tRNA synthetase family.</text>
</comment>
<keyword id="KW-0030">Aminoacyl-tRNA synthetase</keyword>
<keyword id="KW-0067">ATP-binding</keyword>
<keyword id="KW-0963">Cytoplasm</keyword>
<keyword id="KW-0436">Ligase</keyword>
<keyword id="KW-0547">Nucleotide-binding</keyword>
<keyword id="KW-0648">Protein biosynthesis</keyword>
<evidence type="ECO:0000255" key="1">
    <source>
        <dbReference type="HAMAP-Rule" id="MF_00127"/>
    </source>
</evidence>
<organism>
    <name type="scientific">Pseudomonas fluorescens (strain Pf0-1)</name>
    <dbReference type="NCBI Taxonomy" id="205922"/>
    <lineage>
        <taxon>Bacteria</taxon>
        <taxon>Pseudomonadati</taxon>
        <taxon>Pseudomonadota</taxon>
        <taxon>Gammaproteobacteria</taxon>
        <taxon>Pseudomonadales</taxon>
        <taxon>Pseudomonadaceae</taxon>
        <taxon>Pseudomonas</taxon>
    </lineage>
</organism>
<name>SYH_PSEPF</name>
<dbReference type="EC" id="6.1.1.21" evidence="1"/>
<dbReference type="EMBL" id="CP000094">
    <property type="protein sequence ID" value="ABA76337.1"/>
    <property type="molecule type" value="Genomic_DNA"/>
</dbReference>
<dbReference type="RefSeq" id="WP_011335808.1">
    <property type="nucleotide sequence ID" value="NC_007492.2"/>
</dbReference>
<dbReference type="SMR" id="Q3K7B7"/>
<dbReference type="KEGG" id="pfo:Pfl01_4600"/>
<dbReference type="eggNOG" id="COG0124">
    <property type="taxonomic scope" value="Bacteria"/>
</dbReference>
<dbReference type="HOGENOM" id="CLU_025113_1_1_6"/>
<dbReference type="Proteomes" id="UP000002704">
    <property type="component" value="Chromosome"/>
</dbReference>
<dbReference type="GO" id="GO:0005737">
    <property type="term" value="C:cytoplasm"/>
    <property type="evidence" value="ECO:0007669"/>
    <property type="project" value="UniProtKB-SubCell"/>
</dbReference>
<dbReference type="GO" id="GO:0005524">
    <property type="term" value="F:ATP binding"/>
    <property type="evidence" value="ECO:0007669"/>
    <property type="project" value="UniProtKB-UniRule"/>
</dbReference>
<dbReference type="GO" id="GO:0004821">
    <property type="term" value="F:histidine-tRNA ligase activity"/>
    <property type="evidence" value="ECO:0007669"/>
    <property type="project" value="UniProtKB-UniRule"/>
</dbReference>
<dbReference type="GO" id="GO:0006427">
    <property type="term" value="P:histidyl-tRNA aminoacylation"/>
    <property type="evidence" value="ECO:0007669"/>
    <property type="project" value="UniProtKB-UniRule"/>
</dbReference>
<dbReference type="CDD" id="cd00773">
    <property type="entry name" value="HisRS-like_core"/>
    <property type="match status" value="1"/>
</dbReference>
<dbReference type="CDD" id="cd00859">
    <property type="entry name" value="HisRS_anticodon"/>
    <property type="match status" value="1"/>
</dbReference>
<dbReference type="FunFam" id="3.30.930.10:FF:000005">
    <property type="entry name" value="Histidine--tRNA ligase"/>
    <property type="match status" value="1"/>
</dbReference>
<dbReference type="Gene3D" id="3.40.50.800">
    <property type="entry name" value="Anticodon-binding domain"/>
    <property type="match status" value="1"/>
</dbReference>
<dbReference type="Gene3D" id="3.30.930.10">
    <property type="entry name" value="Bira Bifunctional Protein, Domain 2"/>
    <property type="match status" value="1"/>
</dbReference>
<dbReference type="HAMAP" id="MF_00127">
    <property type="entry name" value="His_tRNA_synth"/>
    <property type="match status" value="1"/>
</dbReference>
<dbReference type="InterPro" id="IPR006195">
    <property type="entry name" value="aa-tRNA-synth_II"/>
</dbReference>
<dbReference type="InterPro" id="IPR045864">
    <property type="entry name" value="aa-tRNA-synth_II/BPL/LPL"/>
</dbReference>
<dbReference type="InterPro" id="IPR004154">
    <property type="entry name" value="Anticodon-bd"/>
</dbReference>
<dbReference type="InterPro" id="IPR036621">
    <property type="entry name" value="Anticodon-bd_dom_sf"/>
</dbReference>
<dbReference type="InterPro" id="IPR015807">
    <property type="entry name" value="His-tRNA-ligase"/>
</dbReference>
<dbReference type="InterPro" id="IPR041715">
    <property type="entry name" value="HisRS-like_core"/>
</dbReference>
<dbReference type="InterPro" id="IPR004516">
    <property type="entry name" value="HisRS/HisZ"/>
</dbReference>
<dbReference type="InterPro" id="IPR033656">
    <property type="entry name" value="HisRS_anticodon"/>
</dbReference>
<dbReference type="NCBIfam" id="TIGR00442">
    <property type="entry name" value="hisS"/>
    <property type="match status" value="1"/>
</dbReference>
<dbReference type="PANTHER" id="PTHR43707:SF1">
    <property type="entry name" value="HISTIDINE--TRNA LIGASE, MITOCHONDRIAL-RELATED"/>
    <property type="match status" value="1"/>
</dbReference>
<dbReference type="PANTHER" id="PTHR43707">
    <property type="entry name" value="HISTIDYL-TRNA SYNTHETASE"/>
    <property type="match status" value="1"/>
</dbReference>
<dbReference type="Pfam" id="PF03129">
    <property type="entry name" value="HGTP_anticodon"/>
    <property type="match status" value="1"/>
</dbReference>
<dbReference type="Pfam" id="PF13393">
    <property type="entry name" value="tRNA-synt_His"/>
    <property type="match status" value="1"/>
</dbReference>
<dbReference type="PIRSF" id="PIRSF001549">
    <property type="entry name" value="His-tRNA_synth"/>
    <property type="match status" value="1"/>
</dbReference>
<dbReference type="SUPFAM" id="SSF52954">
    <property type="entry name" value="Class II aaRS ABD-related"/>
    <property type="match status" value="1"/>
</dbReference>
<dbReference type="SUPFAM" id="SSF55681">
    <property type="entry name" value="Class II aaRS and biotin synthetases"/>
    <property type="match status" value="1"/>
</dbReference>
<dbReference type="PROSITE" id="PS50862">
    <property type="entry name" value="AA_TRNA_LIGASE_II"/>
    <property type="match status" value="1"/>
</dbReference>
<sequence>MSKSLQAIRGMNDILPEQTPVWRYFEGTVSRLLDNYGYKQIRMPIVEFTELFKRSIGEVTDIVEKEMYTFEDRNGDSLTLRPEGTAACVRAVLEHGITGGGQVQKLWYIGPMFRHERPQKGRYRQFHQIGLEVFNLDGPDIDAELIIMTWRLWGELGIRDAVKLELNSLGTSESRGRYREALVEYLSAHHDKLDEDSQRRLKTNPLRVLDTKNADTQAVLVDAPKMADYLDDESRAHFKGLKARLDAVGIPYVLNPKLVRGLDYYSKTVFEWVTDKLGAQGTVCAGGRYDGLVEQMGGKPTPGVGFAMGIERLVLLLETLEQIPEEISRQVDVYLCAFGEEAELAGLALAERVRDQLPNLRLQVNAGAGSFKSQFKKADKSGALYALILGDDEMAQQVVGFKPLRGQGEQQSIAWDALAAHLATCVVQG</sequence>
<gene>
    <name evidence="1" type="primary">hisS</name>
    <name type="ordered locus">Pfl01_4600</name>
</gene>
<reference key="1">
    <citation type="journal article" date="2009" name="Genome Biol.">
        <title>Genomic and genetic analyses of diversity and plant interactions of Pseudomonas fluorescens.</title>
        <authorList>
            <person name="Silby M.W."/>
            <person name="Cerdeno-Tarraga A.M."/>
            <person name="Vernikos G.S."/>
            <person name="Giddens S.R."/>
            <person name="Jackson R.W."/>
            <person name="Preston G.M."/>
            <person name="Zhang X.-X."/>
            <person name="Moon C.D."/>
            <person name="Gehrig S.M."/>
            <person name="Godfrey S.A.C."/>
            <person name="Knight C.G."/>
            <person name="Malone J.G."/>
            <person name="Robinson Z."/>
            <person name="Spiers A.J."/>
            <person name="Harris S."/>
            <person name="Challis G.L."/>
            <person name="Yaxley A.M."/>
            <person name="Harris D."/>
            <person name="Seeger K."/>
            <person name="Murphy L."/>
            <person name="Rutter S."/>
            <person name="Squares R."/>
            <person name="Quail M.A."/>
            <person name="Saunders E."/>
            <person name="Mavromatis K."/>
            <person name="Brettin T.S."/>
            <person name="Bentley S.D."/>
            <person name="Hothersall J."/>
            <person name="Stephens E."/>
            <person name="Thomas C.M."/>
            <person name="Parkhill J."/>
            <person name="Levy S.B."/>
            <person name="Rainey P.B."/>
            <person name="Thomson N.R."/>
        </authorList>
    </citation>
    <scope>NUCLEOTIDE SEQUENCE [LARGE SCALE GENOMIC DNA]</scope>
    <source>
        <strain>Pf0-1</strain>
    </source>
</reference>
<protein>
    <recommendedName>
        <fullName evidence="1">Histidine--tRNA ligase</fullName>
        <ecNumber evidence="1">6.1.1.21</ecNumber>
    </recommendedName>
    <alternativeName>
        <fullName evidence="1">Histidyl-tRNA synthetase</fullName>
        <shortName evidence="1">HisRS</shortName>
    </alternativeName>
</protein>